<keyword id="KW-0121">Carboxypeptidase</keyword>
<keyword id="KW-1015">Disulfide bond</keyword>
<keyword id="KW-0325">Glycoprotein</keyword>
<keyword id="KW-0378">Hydrolase</keyword>
<keyword id="KW-0479">Metal-binding</keyword>
<keyword id="KW-0482">Metalloprotease</keyword>
<keyword id="KW-0645">Protease</keyword>
<keyword id="KW-0964">Secreted</keyword>
<keyword id="KW-0732">Signal</keyword>
<keyword id="KW-0862">Zinc</keyword>
<feature type="signal peptide" evidence="2">
    <location>
        <begin position="1"/>
        <end position="23"/>
    </location>
</feature>
<feature type="chain" id="PRO_0000028566" description="Angiotensin-converting enzyme">
    <location>
        <begin position="24"/>
        <end position="616"/>
    </location>
</feature>
<feature type="domain" description="Peptidase M2" evidence="3">
    <location>
        <begin position="27"/>
        <end position="610"/>
    </location>
</feature>
<feature type="active site" description="Proton acceptor" evidence="3">
    <location>
        <position position="377"/>
    </location>
</feature>
<feature type="active site" description="Proton donor" evidence="3">
    <location>
        <position position="506"/>
    </location>
</feature>
<feature type="binding site" evidence="3">
    <location>
        <position position="180"/>
    </location>
    <ligand>
        <name>chloride</name>
        <dbReference type="ChEBI" id="CHEBI:17996"/>
        <label>1</label>
    </ligand>
</feature>
<feature type="binding site" evidence="3">
    <location>
        <position position="218"/>
    </location>
    <ligand>
        <name>chloride</name>
        <dbReference type="ChEBI" id="CHEBI:17996"/>
        <label>2</label>
    </ligand>
</feature>
<feature type="binding site" evidence="3">
    <location>
        <position position="376"/>
    </location>
    <ligand>
        <name>Zn(2+)</name>
        <dbReference type="ChEBI" id="CHEBI:29105"/>
        <note>catalytic</note>
    </ligand>
</feature>
<feature type="binding site" evidence="3">
    <location>
        <position position="380"/>
    </location>
    <ligand>
        <name>Zn(2+)</name>
        <dbReference type="ChEBI" id="CHEBI:29105"/>
        <note>catalytic</note>
    </ligand>
</feature>
<feature type="binding site" evidence="3">
    <location>
        <position position="404"/>
    </location>
    <ligand>
        <name>Zn(2+)</name>
        <dbReference type="ChEBI" id="CHEBI:29105"/>
        <note>catalytic</note>
    </ligand>
</feature>
<feature type="binding site" evidence="3">
    <location>
        <position position="478"/>
    </location>
    <ligand>
        <name>chloride</name>
        <dbReference type="ChEBI" id="CHEBI:17996"/>
        <label>1</label>
    </ligand>
</feature>
<feature type="binding site" evidence="3">
    <location>
        <position position="482"/>
    </location>
    <ligand>
        <name>chloride</name>
        <dbReference type="ChEBI" id="CHEBI:17996"/>
        <label>1</label>
    </ligand>
</feature>
<feature type="binding site" evidence="3">
    <location>
        <position position="515"/>
    </location>
    <ligand>
        <name>chloride</name>
        <dbReference type="ChEBI" id="CHEBI:17996"/>
        <label>2</label>
    </ligand>
</feature>
<feature type="glycosylation site" description="N-linked (GlcNAc...) asparagine" evidence="2">
    <location>
        <position position="61"/>
    </location>
</feature>
<feature type="glycosylation site" description="N-linked (GlcNAc...) asparagine" evidence="2">
    <location>
        <position position="96"/>
    </location>
</feature>
<feature type="glycosylation site" description="N-linked (GlcNAc...) asparagine" evidence="2">
    <location>
        <position position="303"/>
    </location>
</feature>
<feature type="glycosylation site" description="N-linked (GlcNAc...) asparagine" evidence="2">
    <location>
        <position position="428"/>
    </location>
</feature>
<feature type="glycosylation site" description="N-linked (GlcNAc...) asparagine" evidence="2">
    <location>
        <position position="535"/>
    </location>
</feature>
<feature type="glycosylation site" description="N-linked (GlcNAc...) asparagine" evidence="2">
    <location>
        <position position="573"/>
    </location>
</feature>
<feature type="disulfide bond" evidence="3">
    <location>
        <begin position="142"/>
        <end position="152"/>
    </location>
</feature>
<feature type="disulfide bond" evidence="3">
    <location>
        <begin position="345"/>
        <end position="363"/>
    </location>
</feature>
<feature type="disulfide bond" evidence="3">
    <location>
        <begin position="531"/>
        <end position="543"/>
    </location>
</feature>
<proteinExistence type="evidence at transcript level"/>
<organism>
    <name type="scientific">Theromyzon tessulatum</name>
    <name type="common">Duck leech</name>
    <dbReference type="NCBI Taxonomy" id="13286"/>
    <lineage>
        <taxon>Eukaryota</taxon>
        <taxon>Metazoa</taxon>
        <taxon>Spiralia</taxon>
        <taxon>Lophotrochozoa</taxon>
        <taxon>Annelida</taxon>
        <taxon>Clitellata</taxon>
        <taxon>Hirudinea</taxon>
        <taxon>Rhynchobdellida</taxon>
        <taxon>Glossiphoniidae</taxon>
        <taxon>Theromyzon</taxon>
    </lineage>
</organism>
<dbReference type="EC" id="3.4.15.1"/>
<dbReference type="EMBL" id="AY560004">
    <property type="protein sequence ID" value="AAS57725.1"/>
    <property type="molecule type" value="mRNA"/>
</dbReference>
<dbReference type="SMR" id="Q6Q4G4"/>
<dbReference type="MEROPS" id="M02.005"/>
<dbReference type="GlyCosmos" id="Q6Q4G4">
    <property type="glycosylation" value="6 sites, No reported glycans"/>
</dbReference>
<dbReference type="GO" id="GO:0005576">
    <property type="term" value="C:extracellular region"/>
    <property type="evidence" value="ECO:0007669"/>
    <property type="project" value="UniProtKB-SubCell"/>
</dbReference>
<dbReference type="GO" id="GO:0005886">
    <property type="term" value="C:plasma membrane"/>
    <property type="evidence" value="ECO:0007669"/>
    <property type="project" value="TreeGrafter"/>
</dbReference>
<dbReference type="GO" id="GO:0004180">
    <property type="term" value="F:carboxypeptidase activity"/>
    <property type="evidence" value="ECO:0007669"/>
    <property type="project" value="UniProtKB-KW"/>
</dbReference>
<dbReference type="GO" id="GO:0046872">
    <property type="term" value="F:metal ion binding"/>
    <property type="evidence" value="ECO:0007669"/>
    <property type="project" value="UniProtKB-KW"/>
</dbReference>
<dbReference type="GO" id="GO:0008237">
    <property type="term" value="F:metallopeptidase activity"/>
    <property type="evidence" value="ECO:0007669"/>
    <property type="project" value="UniProtKB-KW"/>
</dbReference>
<dbReference type="GO" id="GO:0008241">
    <property type="term" value="F:peptidyl-dipeptidase activity"/>
    <property type="evidence" value="ECO:0007669"/>
    <property type="project" value="UniProtKB-EC"/>
</dbReference>
<dbReference type="GO" id="GO:0006508">
    <property type="term" value="P:proteolysis"/>
    <property type="evidence" value="ECO:0007669"/>
    <property type="project" value="UniProtKB-KW"/>
</dbReference>
<dbReference type="CDD" id="cd06461">
    <property type="entry name" value="M2_ACE"/>
    <property type="match status" value="1"/>
</dbReference>
<dbReference type="FunFam" id="1.10.1370.30:FF:000004">
    <property type="entry name" value="Angiotensin-converting enzyme"/>
    <property type="match status" value="1"/>
</dbReference>
<dbReference type="Gene3D" id="1.10.1370.30">
    <property type="match status" value="2"/>
</dbReference>
<dbReference type="InterPro" id="IPR001548">
    <property type="entry name" value="Peptidase_M2"/>
</dbReference>
<dbReference type="PANTHER" id="PTHR10514">
    <property type="entry name" value="ANGIOTENSIN-CONVERTING ENZYME"/>
    <property type="match status" value="1"/>
</dbReference>
<dbReference type="PANTHER" id="PTHR10514:SF27">
    <property type="entry name" value="ANGIOTENSIN-CONVERTING ENZYME"/>
    <property type="match status" value="1"/>
</dbReference>
<dbReference type="Pfam" id="PF01401">
    <property type="entry name" value="Peptidase_M2"/>
    <property type="match status" value="1"/>
</dbReference>
<dbReference type="PRINTS" id="PR00791">
    <property type="entry name" value="PEPDIPTASEA"/>
</dbReference>
<dbReference type="SUPFAM" id="SSF55486">
    <property type="entry name" value="Metalloproteases ('zincins'), catalytic domain"/>
    <property type="match status" value="1"/>
</dbReference>
<dbReference type="PROSITE" id="PS52011">
    <property type="entry name" value="PEPTIDASE_M2"/>
    <property type="match status" value="1"/>
</dbReference>
<protein>
    <recommendedName>
        <fullName>Angiotensin-converting enzyme</fullName>
        <ecNumber>3.4.15.1</ecNumber>
    </recommendedName>
    <alternativeName>
        <fullName>Dipeptidyl carboxypeptidase I</fullName>
    </alternativeName>
    <alternativeName>
        <fullName>Kininase II</fullName>
    </alternativeName>
    <alternativeName>
        <fullName>TtACE</fullName>
    </alternativeName>
</protein>
<name>ACE_THETS</name>
<comment type="catalytic activity">
    <reaction evidence="4">
        <text>Release of a C-terminal dipeptide, oligopeptide-|-Xaa-Yaa, when Xaa is not Pro, and Yaa is neither Asp nor Glu. Thus, conversion of angiotensin I to angiotensin II, with increase in vasoconstrictor activity, but no action on angiotensin II.</text>
        <dbReference type="EC" id="3.4.15.1"/>
    </reaction>
</comment>
<comment type="cofactor">
    <cofactor evidence="1">
        <name>Zn(2+)</name>
        <dbReference type="ChEBI" id="CHEBI:29105"/>
    </cofactor>
    <text evidence="1">Binds 1 zinc ion per subunit.</text>
</comment>
<comment type="cofactor">
    <cofactor evidence="1">
        <name>chloride</name>
        <dbReference type="ChEBI" id="CHEBI:17996"/>
    </cofactor>
    <text evidence="1">Chloride.</text>
</comment>
<comment type="activity regulation">
    <text evidence="4">Activated by chloride. Inhibited by captopril and lisinopril, and to a lesser extent by delaprilat.</text>
</comment>
<comment type="subcellular location">
    <subcellularLocation>
        <location evidence="5">Secreted</location>
        <location evidence="5">Extracellular space</location>
    </subcellularLocation>
</comment>
<comment type="tissue specificity">
    <text evidence="4">Epithelial cells of the midgut.</text>
</comment>
<comment type="developmental stage">
    <text>Expressed at stages 1 and 2.</text>
</comment>
<comment type="similarity">
    <text evidence="5">Belongs to the peptidase M2 family.</text>
</comment>
<reference key="1">
    <citation type="journal article" date="2004" name="Biochem. J.">
        <title>Characterization of the first non-insect invertebrate functional angiotensin-converting enzyme (ACE): leech TtACE resembles the N-domain of mammalian ACE.</title>
        <authorList>
            <person name="Riviere G."/>
            <person name="Michaud A."/>
            <person name="Deloffre L."/>
            <person name="Vandenbulcke F."/>
            <person name="Levoye A."/>
            <person name="Breton C."/>
            <person name="Corvol P."/>
            <person name="Salzet M."/>
            <person name="Vieau D."/>
        </authorList>
    </citation>
    <scope>NUCLEOTIDE SEQUENCE [MRNA]</scope>
    <scope>ENZYME ACTIVITY</scope>
    <scope>ACTIVITY REGULATION</scope>
    <scope>TISSUE SPECIFICITY</scope>
</reference>
<sequence>MNLINFSYLNLLFGAGLFSVLESATILNTESDAKKWLTTYNDEAGKYIYDATEAEWNYNTNLTDHNLGISIKKSNDLATFTEQKAIEANKKFVWKNFTDPLLKREFSKITDIGTASLSDEDFQKMSGLNSDLTKIYSTAKVCNKPNDPSGKCYPLDPDLSDIISKSNDLEELTWAWKGWRDASGKHMPDKYDEFVQLLNKAANINGYEDNGDYWRSWYESPTFRKDCEDLWQEIKPFYEQLHAYVRRKLQKKYPQIAFPKEGHIPAHLLGNMWAQSWENIEYLLRPAPDLPSMDITEELVKQNYTALKLFQLSDTFFKSLGLIQMPQPFWEKSMIEKPADRDVVCHASAWDFYNRKDFRIKQCTVVDMHWFMTTHHEMGHIEYYLHYKDQPISFRSGANPGFHEAIADIASLSVATPEYMQSVSLLPNFTDDPNGDLNFLMNQALTKVAFLPFGYLIDQWRWDVFSGDTPRPKYNSKWWHNRCKYQGVYPPVIRSEQDFDAGSKFHVPNNTPYIRYFVAHIIQFQFHEALCKAANNSRPLHRCNIANSKEAGKKLAELMKSGSSIPWPKVLENLTGSEKMSAKSLMAYYKPLIDWPEKRKPRAENWMGGKMSSWIV</sequence>
<evidence type="ECO:0000250" key="1"/>
<evidence type="ECO:0000255" key="2"/>
<evidence type="ECO:0000255" key="3">
    <source>
        <dbReference type="PROSITE-ProRule" id="PRU01355"/>
    </source>
</evidence>
<evidence type="ECO:0000269" key="4">
    <source>
    </source>
</evidence>
<evidence type="ECO:0000305" key="5"/>
<accession>Q6Q4G4</accession>
<gene>
    <name type="primary">ACE</name>
</gene>